<organism>
    <name type="scientific">Mus musculus</name>
    <name type="common">Mouse</name>
    <dbReference type="NCBI Taxonomy" id="10090"/>
    <lineage>
        <taxon>Eukaryota</taxon>
        <taxon>Metazoa</taxon>
        <taxon>Chordata</taxon>
        <taxon>Craniata</taxon>
        <taxon>Vertebrata</taxon>
        <taxon>Euteleostomi</taxon>
        <taxon>Mammalia</taxon>
        <taxon>Eutheria</taxon>
        <taxon>Euarchontoglires</taxon>
        <taxon>Glires</taxon>
        <taxon>Rodentia</taxon>
        <taxon>Myomorpha</taxon>
        <taxon>Muroidea</taxon>
        <taxon>Muridae</taxon>
        <taxon>Murinae</taxon>
        <taxon>Mus</taxon>
        <taxon>Mus</taxon>
    </lineage>
</organism>
<sequence length="160" mass="18976">MAFTFAAFCYMLSLVLCAALIFFAIWHIIAFDELRTDFKSPIDQCNPVHARERLRNIERICFLLRKLVLPEYSIHSLFCIMFLCAQEWLTLGLNVPLLFYHFWRYFHCPADSSELAYDPPVVMNADTLSYCQKEAWCKLAFYLLSFFYYLYCMIYTLVSS</sequence>
<protein>
    <recommendedName>
        <fullName>Protein cornichon homolog 3</fullName>
        <shortName>CNIH-3</shortName>
    </recommendedName>
    <alternativeName>
        <fullName>Cornichon family AMPA receptor auxiliary protein 3</fullName>
    </alternativeName>
</protein>
<comment type="function">
    <text evidence="1">Regulates the trafficking and gating properties of AMPA-selective glutamate receptors (AMPARs). Promotes their targeting to the cell membrane and synapses and modulates their gating properties by regulating their rates of activation, deactivation and desensitization (By similarity).</text>
</comment>
<comment type="subunit">
    <text evidence="1">Acts as an auxiliary subunit for AMPA-selective glutamate receptors (AMPARs). Found in a complex with GRIA1, GRIA2, GRIA3, GRIA4, CNIH2, CACNG2, CACNG3, CACNG4, CACNG5, CACNG7 and CACNG8 (By similarity).</text>
</comment>
<comment type="subcellular location">
    <subcellularLocation>
        <location evidence="1">Postsynaptic cell membrane</location>
        <topology evidence="1">Multi-pass membrane protein</topology>
    </subcellularLocation>
    <text evidence="1">Also localizes to the cell membrane of extrasynaptic sites (dendritic shafts, spines of pyramidal cells).</text>
</comment>
<comment type="similarity">
    <text evidence="3">Belongs to the cornichon family.</text>
</comment>
<gene>
    <name type="primary">Cnih3</name>
</gene>
<keyword id="KW-0002">3D-structure</keyword>
<keyword id="KW-1003">Cell membrane</keyword>
<keyword id="KW-0472">Membrane</keyword>
<keyword id="KW-0628">Postsynaptic cell membrane</keyword>
<keyword id="KW-1185">Reference proteome</keyword>
<keyword id="KW-0770">Synapse</keyword>
<keyword id="KW-0812">Transmembrane</keyword>
<keyword id="KW-1133">Transmembrane helix</keyword>
<dbReference type="EMBL" id="AK033911">
    <property type="protein sequence ID" value="BAC28511.1"/>
    <property type="molecule type" value="mRNA"/>
</dbReference>
<dbReference type="EMBL" id="BC115640">
    <property type="protein sequence ID" value="AAI15641.1"/>
    <property type="molecule type" value="mRNA"/>
</dbReference>
<dbReference type="EMBL" id="BC115641">
    <property type="protein sequence ID" value="AAI15642.1"/>
    <property type="molecule type" value="mRNA"/>
</dbReference>
<dbReference type="CCDS" id="CCDS48470.1"/>
<dbReference type="RefSeq" id="NP_001153683.1">
    <property type="nucleotide sequence ID" value="NM_001160211.2"/>
</dbReference>
<dbReference type="RefSeq" id="NP_001153684.1">
    <property type="nucleotide sequence ID" value="NM_001160212.1"/>
</dbReference>
<dbReference type="RefSeq" id="NP_082684.1">
    <property type="nucleotide sequence ID" value="NM_028408.3"/>
</dbReference>
<dbReference type="PDB" id="6PEQ">
    <property type="method" value="EM"/>
    <property type="resolution" value="2.97 A"/>
    <property type="chains" value="E/F/G/H=1-160"/>
</dbReference>
<dbReference type="PDB" id="6UCB">
    <property type="method" value="EM"/>
    <property type="resolution" value="3.28 A"/>
    <property type="chains" value="E/F/G/H=1-160"/>
</dbReference>
<dbReference type="PDB" id="6UD4">
    <property type="method" value="EM"/>
    <property type="resolution" value="3.30 A"/>
    <property type="chains" value="E/F/G/H=1-160"/>
</dbReference>
<dbReference type="PDB" id="6UD8">
    <property type="method" value="EM"/>
    <property type="resolution" value="3.20 A"/>
    <property type="chains" value="E/F/G/H=1-160"/>
</dbReference>
<dbReference type="PDBsum" id="6PEQ"/>
<dbReference type="PDBsum" id="6UCB"/>
<dbReference type="PDBsum" id="6UD4"/>
<dbReference type="PDBsum" id="6UD8"/>
<dbReference type="EMDB" id="EMD-20330"/>
<dbReference type="EMDB" id="EMD-20727"/>
<dbReference type="EMDB" id="EMD-20733"/>
<dbReference type="EMDB" id="EMD-20734"/>
<dbReference type="SMR" id="Q6ZWS4"/>
<dbReference type="FunCoup" id="Q6ZWS4">
    <property type="interactions" value="80"/>
</dbReference>
<dbReference type="STRING" id="10090.ENSMUSP00000124611"/>
<dbReference type="SwissPalm" id="Q6ZWS4"/>
<dbReference type="ProteomicsDB" id="283450"/>
<dbReference type="Antibodypedia" id="34640">
    <property type="antibodies" value="118 antibodies from 20 providers"/>
</dbReference>
<dbReference type="DNASU" id="72978"/>
<dbReference type="Ensembl" id="ENSMUST00000027795.14">
    <property type="protein sequence ID" value="ENSMUSP00000027795.8"/>
    <property type="gene ID" value="ENSMUSG00000026514.15"/>
</dbReference>
<dbReference type="GeneID" id="72978"/>
<dbReference type="KEGG" id="mmu:72978"/>
<dbReference type="UCSC" id="uc007dxi.2">
    <property type="organism name" value="mouse"/>
</dbReference>
<dbReference type="AGR" id="MGI:1920228"/>
<dbReference type="CTD" id="149111"/>
<dbReference type="MGI" id="MGI:1920228">
    <property type="gene designation" value="Cnih3"/>
</dbReference>
<dbReference type="VEuPathDB" id="HostDB:ENSMUSG00000026514"/>
<dbReference type="GeneTree" id="ENSGT00950000182834"/>
<dbReference type="HOGENOM" id="CLU_112942_1_0_1"/>
<dbReference type="InParanoid" id="Q6ZWS4"/>
<dbReference type="OMA" id="VFYHFWR"/>
<dbReference type="Reactome" id="R-MMU-204005">
    <property type="pathway name" value="COPII-mediated vesicle transport"/>
</dbReference>
<dbReference type="Reactome" id="R-MMU-5694530">
    <property type="pathway name" value="Cargo concentration in the ER"/>
</dbReference>
<dbReference type="BioGRID-ORCS" id="72978">
    <property type="hits" value="0 hits in 80 CRISPR screens"/>
</dbReference>
<dbReference type="PRO" id="PR:Q6ZWS4"/>
<dbReference type="Proteomes" id="UP000000589">
    <property type="component" value="Chromosome 1"/>
</dbReference>
<dbReference type="RNAct" id="Q6ZWS4">
    <property type="molecule type" value="protein"/>
</dbReference>
<dbReference type="Bgee" id="ENSMUSG00000026514">
    <property type="expression patterns" value="Expressed in cortical plate and 61 other cell types or tissues"/>
</dbReference>
<dbReference type="ExpressionAtlas" id="Q6ZWS4">
    <property type="expression patterns" value="baseline and differential"/>
</dbReference>
<dbReference type="GO" id="GO:0032281">
    <property type="term" value="C:AMPA glutamate receptor complex"/>
    <property type="evidence" value="ECO:0000250"/>
    <property type="project" value="UniProtKB"/>
</dbReference>
<dbReference type="GO" id="GO:0043198">
    <property type="term" value="C:dendritic shaft"/>
    <property type="evidence" value="ECO:0000250"/>
    <property type="project" value="UniProtKB"/>
</dbReference>
<dbReference type="GO" id="GO:0098978">
    <property type="term" value="C:glutamatergic synapse"/>
    <property type="evidence" value="ECO:0000314"/>
    <property type="project" value="SynGO"/>
</dbReference>
<dbReference type="GO" id="GO:0045211">
    <property type="term" value="C:postsynaptic membrane"/>
    <property type="evidence" value="ECO:0000250"/>
    <property type="project" value="UniProtKB"/>
</dbReference>
<dbReference type="GO" id="GO:0016247">
    <property type="term" value="F:channel regulator activity"/>
    <property type="evidence" value="ECO:0000266"/>
    <property type="project" value="MGI"/>
</dbReference>
<dbReference type="GO" id="GO:0051668">
    <property type="term" value="P:localization within membrane"/>
    <property type="evidence" value="ECO:0000266"/>
    <property type="project" value="MGI"/>
</dbReference>
<dbReference type="GO" id="GO:0099645">
    <property type="term" value="P:neurotransmitter receptor localization to postsynaptic specialization membrane"/>
    <property type="evidence" value="ECO:0000314"/>
    <property type="project" value="SynGO"/>
</dbReference>
<dbReference type="GO" id="GO:2000311">
    <property type="term" value="P:regulation of AMPA receptor activity"/>
    <property type="evidence" value="ECO:0000250"/>
    <property type="project" value="UniProtKB"/>
</dbReference>
<dbReference type="GO" id="GO:0042391">
    <property type="term" value="P:regulation of membrane potential"/>
    <property type="evidence" value="ECO:0000266"/>
    <property type="project" value="MGI"/>
</dbReference>
<dbReference type="GO" id="GO:0035249">
    <property type="term" value="P:synaptic transmission, glutamatergic"/>
    <property type="evidence" value="ECO:0000266"/>
    <property type="project" value="MGI"/>
</dbReference>
<dbReference type="GO" id="GO:0016192">
    <property type="term" value="P:vesicle-mediated transport"/>
    <property type="evidence" value="ECO:0007669"/>
    <property type="project" value="InterPro"/>
</dbReference>
<dbReference type="InterPro" id="IPR003377">
    <property type="entry name" value="Cornichon"/>
</dbReference>
<dbReference type="InterPro" id="IPR033466">
    <property type="entry name" value="Cornichon_conserved"/>
</dbReference>
<dbReference type="PANTHER" id="PTHR12290">
    <property type="entry name" value="CORNICHON-RELATED"/>
    <property type="match status" value="1"/>
</dbReference>
<dbReference type="Pfam" id="PF03311">
    <property type="entry name" value="Cornichon"/>
    <property type="match status" value="2"/>
</dbReference>
<dbReference type="SMART" id="SM01398">
    <property type="entry name" value="Cornichon"/>
    <property type="match status" value="1"/>
</dbReference>
<dbReference type="PROSITE" id="PS01340">
    <property type="entry name" value="CORNICHON"/>
    <property type="match status" value="1"/>
</dbReference>
<reference key="1">
    <citation type="journal article" date="2005" name="Science">
        <title>The transcriptional landscape of the mammalian genome.</title>
        <authorList>
            <person name="Carninci P."/>
            <person name="Kasukawa T."/>
            <person name="Katayama S."/>
            <person name="Gough J."/>
            <person name="Frith M.C."/>
            <person name="Maeda N."/>
            <person name="Oyama R."/>
            <person name="Ravasi T."/>
            <person name="Lenhard B."/>
            <person name="Wells C."/>
            <person name="Kodzius R."/>
            <person name="Shimokawa K."/>
            <person name="Bajic V.B."/>
            <person name="Brenner S.E."/>
            <person name="Batalov S."/>
            <person name="Forrest A.R."/>
            <person name="Zavolan M."/>
            <person name="Davis M.J."/>
            <person name="Wilming L.G."/>
            <person name="Aidinis V."/>
            <person name="Allen J.E."/>
            <person name="Ambesi-Impiombato A."/>
            <person name="Apweiler R."/>
            <person name="Aturaliya R.N."/>
            <person name="Bailey T.L."/>
            <person name="Bansal M."/>
            <person name="Baxter L."/>
            <person name="Beisel K.W."/>
            <person name="Bersano T."/>
            <person name="Bono H."/>
            <person name="Chalk A.M."/>
            <person name="Chiu K.P."/>
            <person name="Choudhary V."/>
            <person name="Christoffels A."/>
            <person name="Clutterbuck D.R."/>
            <person name="Crowe M.L."/>
            <person name="Dalla E."/>
            <person name="Dalrymple B.P."/>
            <person name="de Bono B."/>
            <person name="Della Gatta G."/>
            <person name="di Bernardo D."/>
            <person name="Down T."/>
            <person name="Engstrom P."/>
            <person name="Fagiolini M."/>
            <person name="Faulkner G."/>
            <person name="Fletcher C.F."/>
            <person name="Fukushima T."/>
            <person name="Furuno M."/>
            <person name="Futaki S."/>
            <person name="Gariboldi M."/>
            <person name="Georgii-Hemming P."/>
            <person name="Gingeras T.R."/>
            <person name="Gojobori T."/>
            <person name="Green R.E."/>
            <person name="Gustincich S."/>
            <person name="Harbers M."/>
            <person name="Hayashi Y."/>
            <person name="Hensch T.K."/>
            <person name="Hirokawa N."/>
            <person name="Hill D."/>
            <person name="Huminiecki L."/>
            <person name="Iacono M."/>
            <person name="Ikeo K."/>
            <person name="Iwama A."/>
            <person name="Ishikawa T."/>
            <person name="Jakt M."/>
            <person name="Kanapin A."/>
            <person name="Katoh M."/>
            <person name="Kawasawa Y."/>
            <person name="Kelso J."/>
            <person name="Kitamura H."/>
            <person name="Kitano H."/>
            <person name="Kollias G."/>
            <person name="Krishnan S.P."/>
            <person name="Kruger A."/>
            <person name="Kummerfeld S.K."/>
            <person name="Kurochkin I.V."/>
            <person name="Lareau L.F."/>
            <person name="Lazarevic D."/>
            <person name="Lipovich L."/>
            <person name="Liu J."/>
            <person name="Liuni S."/>
            <person name="McWilliam S."/>
            <person name="Madan Babu M."/>
            <person name="Madera M."/>
            <person name="Marchionni L."/>
            <person name="Matsuda H."/>
            <person name="Matsuzawa S."/>
            <person name="Miki H."/>
            <person name="Mignone F."/>
            <person name="Miyake S."/>
            <person name="Morris K."/>
            <person name="Mottagui-Tabar S."/>
            <person name="Mulder N."/>
            <person name="Nakano N."/>
            <person name="Nakauchi H."/>
            <person name="Ng P."/>
            <person name="Nilsson R."/>
            <person name="Nishiguchi S."/>
            <person name="Nishikawa S."/>
            <person name="Nori F."/>
            <person name="Ohara O."/>
            <person name="Okazaki Y."/>
            <person name="Orlando V."/>
            <person name="Pang K.C."/>
            <person name="Pavan W.J."/>
            <person name="Pavesi G."/>
            <person name="Pesole G."/>
            <person name="Petrovsky N."/>
            <person name="Piazza S."/>
            <person name="Reed J."/>
            <person name="Reid J.F."/>
            <person name="Ring B.Z."/>
            <person name="Ringwald M."/>
            <person name="Rost B."/>
            <person name="Ruan Y."/>
            <person name="Salzberg S.L."/>
            <person name="Sandelin A."/>
            <person name="Schneider C."/>
            <person name="Schoenbach C."/>
            <person name="Sekiguchi K."/>
            <person name="Semple C.A."/>
            <person name="Seno S."/>
            <person name="Sessa L."/>
            <person name="Sheng Y."/>
            <person name="Shibata Y."/>
            <person name="Shimada H."/>
            <person name="Shimada K."/>
            <person name="Silva D."/>
            <person name="Sinclair B."/>
            <person name="Sperling S."/>
            <person name="Stupka E."/>
            <person name="Sugiura K."/>
            <person name="Sultana R."/>
            <person name="Takenaka Y."/>
            <person name="Taki K."/>
            <person name="Tammoja K."/>
            <person name="Tan S.L."/>
            <person name="Tang S."/>
            <person name="Taylor M.S."/>
            <person name="Tegner J."/>
            <person name="Teichmann S.A."/>
            <person name="Ueda H.R."/>
            <person name="van Nimwegen E."/>
            <person name="Verardo R."/>
            <person name="Wei C.L."/>
            <person name="Yagi K."/>
            <person name="Yamanishi H."/>
            <person name="Zabarovsky E."/>
            <person name="Zhu S."/>
            <person name="Zimmer A."/>
            <person name="Hide W."/>
            <person name="Bult C."/>
            <person name="Grimmond S.M."/>
            <person name="Teasdale R.D."/>
            <person name="Liu E.T."/>
            <person name="Brusic V."/>
            <person name="Quackenbush J."/>
            <person name="Wahlestedt C."/>
            <person name="Mattick J.S."/>
            <person name="Hume D.A."/>
            <person name="Kai C."/>
            <person name="Sasaki D."/>
            <person name="Tomaru Y."/>
            <person name="Fukuda S."/>
            <person name="Kanamori-Katayama M."/>
            <person name="Suzuki M."/>
            <person name="Aoki J."/>
            <person name="Arakawa T."/>
            <person name="Iida J."/>
            <person name="Imamura K."/>
            <person name="Itoh M."/>
            <person name="Kato T."/>
            <person name="Kawaji H."/>
            <person name="Kawagashira N."/>
            <person name="Kawashima T."/>
            <person name="Kojima M."/>
            <person name="Kondo S."/>
            <person name="Konno H."/>
            <person name="Nakano K."/>
            <person name="Ninomiya N."/>
            <person name="Nishio T."/>
            <person name="Okada M."/>
            <person name="Plessy C."/>
            <person name="Shibata K."/>
            <person name="Shiraki T."/>
            <person name="Suzuki S."/>
            <person name="Tagami M."/>
            <person name="Waki K."/>
            <person name="Watahiki A."/>
            <person name="Okamura-Oho Y."/>
            <person name="Suzuki H."/>
            <person name="Kawai J."/>
            <person name="Hayashizaki Y."/>
        </authorList>
    </citation>
    <scope>NUCLEOTIDE SEQUENCE [LARGE SCALE MRNA]</scope>
    <source>
        <strain>C57BL/6J</strain>
        <tissue>Diencephalon</tissue>
    </source>
</reference>
<reference key="2">
    <citation type="journal article" date="2004" name="Genome Res.">
        <title>The status, quality, and expansion of the NIH full-length cDNA project: the Mammalian Gene Collection (MGC).</title>
        <authorList>
            <consortium name="The MGC Project Team"/>
        </authorList>
    </citation>
    <scope>NUCLEOTIDE SEQUENCE [LARGE SCALE MRNA]</scope>
</reference>
<proteinExistence type="evidence at protein level"/>
<name>CNIH3_MOUSE</name>
<feature type="chain" id="PRO_0000122229" description="Protein cornichon homolog 3">
    <location>
        <begin position="1"/>
        <end position="160"/>
    </location>
</feature>
<feature type="topological domain" description="Cytoplasmic" evidence="2">
    <location>
        <begin position="1"/>
        <end position="10"/>
    </location>
</feature>
<feature type="transmembrane region" description="Helical" evidence="2">
    <location>
        <begin position="11"/>
        <end position="31"/>
    </location>
</feature>
<feature type="topological domain" description="Lumenal" evidence="2">
    <location>
        <begin position="32"/>
        <end position="72"/>
    </location>
</feature>
<feature type="transmembrane region" description="Helical" evidence="2">
    <location>
        <begin position="73"/>
        <end position="93"/>
    </location>
</feature>
<feature type="topological domain" description="Cytoplasmic" evidence="2">
    <location>
        <begin position="94"/>
        <end position="138"/>
    </location>
</feature>
<feature type="transmembrane region" description="Helical" evidence="2">
    <location>
        <begin position="139"/>
        <end position="159"/>
    </location>
</feature>
<feature type="topological domain" description="Lumenal" evidence="2">
    <location>
        <position position="160"/>
    </location>
</feature>
<feature type="helix" evidence="4">
    <location>
        <begin position="6"/>
        <end position="34"/>
    </location>
</feature>
<feature type="helix" evidence="4">
    <location>
        <begin position="51"/>
        <end position="66"/>
    </location>
</feature>
<feature type="helix" evidence="4">
    <location>
        <begin position="69"/>
        <end position="84"/>
    </location>
</feature>
<feature type="helix" evidence="4">
    <location>
        <begin position="88"/>
        <end position="106"/>
    </location>
</feature>
<feature type="helix" evidence="4">
    <location>
        <begin position="128"/>
        <end position="157"/>
    </location>
</feature>
<evidence type="ECO:0000250" key="1"/>
<evidence type="ECO:0000255" key="2"/>
<evidence type="ECO:0000305" key="3"/>
<evidence type="ECO:0007829" key="4">
    <source>
        <dbReference type="PDB" id="6PEQ"/>
    </source>
</evidence>
<accession>Q6ZWS4</accession>
<accession>Q14BS0</accession>